<dbReference type="EMBL" id="CP001196">
    <property type="protein sequence ID" value="ACI92788.1"/>
    <property type="molecule type" value="Genomic_DNA"/>
</dbReference>
<dbReference type="EMBL" id="CP002826">
    <property type="protein sequence ID" value="AEI07045.1"/>
    <property type="molecule type" value="Genomic_DNA"/>
</dbReference>
<dbReference type="RefSeq" id="WP_012562817.1">
    <property type="nucleotide sequence ID" value="NC_015684.1"/>
</dbReference>
<dbReference type="SMR" id="B6JER6"/>
<dbReference type="STRING" id="504832.OCA5_c23450"/>
<dbReference type="KEGG" id="oca:OCAR_5660"/>
<dbReference type="KEGG" id="ocg:OCA5_c23450"/>
<dbReference type="PATRIC" id="fig|504832.7.peg.2472"/>
<dbReference type="eggNOG" id="COG0081">
    <property type="taxonomic scope" value="Bacteria"/>
</dbReference>
<dbReference type="HOGENOM" id="CLU_062853_0_0_5"/>
<dbReference type="OrthoDB" id="9803740at2"/>
<dbReference type="Proteomes" id="UP000007730">
    <property type="component" value="Chromosome"/>
</dbReference>
<dbReference type="GO" id="GO:0022625">
    <property type="term" value="C:cytosolic large ribosomal subunit"/>
    <property type="evidence" value="ECO:0007669"/>
    <property type="project" value="TreeGrafter"/>
</dbReference>
<dbReference type="GO" id="GO:0019843">
    <property type="term" value="F:rRNA binding"/>
    <property type="evidence" value="ECO:0007669"/>
    <property type="project" value="UniProtKB-UniRule"/>
</dbReference>
<dbReference type="GO" id="GO:0003735">
    <property type="term" value="F:structural constituent of ribosome"/>
    <property type="evidence" value="ECO:0007669"/>
    <property type="project" value="InterPro"/>
</dbReference>
<dbReference type="GO" id="GO:0000049">
    <property type="term" value="F:tRNA binding"/>
    <property type="evidence" value="ECO:0007669"/>
    <property type="project" value="UniProtKB-KW"/>
</dbReference>
<dbReference type="GO" id="GO:0006417">
    <property type="term" value="P:regulation of translation"/>
    <property type="evidence" value="ECO:0007669"/>
    <property type="project" value="UniProtKB-KW"/>
</dbReference>
<dbReference type="GO" id="GO:0006412">
    <property type="term" value="P:translation"/>
    <property type="evidence" value="ECO:0007669"/>
    <property type="project" value="UniProtKB-UniRule"/>
</dbReference>
<dbReference type="CDD" id="cd00403">
    <property type="entry name" value="Ribosomal_L1"/>
    <property type="match status" value="1"/>
</dbReference>
<dbReference type="FunFam" id="3.40.50.790:FF:000001">
    <property type="entry name" value="50S ribosomal protein L1"/>
    <property type="match status" value="1"/>
</dbReference>
<dbReference type="Gene3D" id="3.30.190.20">
    <property type="match status" value="1"/>
</dbReference>
<dbReference type="Gene3D" id="3.40.50.790">
    <property type="match status" value="1"/>
</dbReference>
<dbReference type="HAMAP" id="MF_01318_B">
    <property type="entry name" value="Ribosomal_uL1_B"/>
    <property type="match status" value="1"/>
</dbReference>
<dbReference type="InterPro" id="IPR005878">
    <property type="entry name" value="Ribosom_uL1_bac-type"/>
</dbReference>
<dbReference type="InterPro" id="IPR002143">
    <property type="entry name" value="Ribosomal_uL1"/>
</dbReference>
<dbReference type="InterPro" id="IPR023674">
    <property type="entry name" value="Ribosomal_uL1-like"/>
</dbReference>
<dbReference type="InterPro" id="IPR028364">
    <property type="entry name" value="Ribosomal_uL1/biogenesis"/>
</dbReference>
<dbReference type="InterPro" id="IPR016095">
    <property type="entry name" value="Ribosomal_uL1_3-a/b-sand"/>
</dbReference>
<dbReference type="InterPro" id="IPR023673">
    <property type="entry name" value="Ribosomal_uL1_CS"/>
</dbReference>
<dbReference type="NCBIfam" id="TIGR01169">
    <property type="entry name" value="rplA_bact"/>
    <property type="match status" value="1"/>
</dbReference>
<dbReference type="PANTHER" id="PTHR36427">
    <property type="entry name" value="54S RIBOSOMAL PROTEIN L1, MITOCHONDRIAL"/>
    <property type="match status" value="1"/>
</dbReference>
<dbReference type="PANTHER" id="PTHR36427:SF3">
    <property type="entry name" value="LARGE RIBOSOMAL SUBUNIT PROTEIN UL1M"/>
    <property type="match status" value="1"/>
</dbReference>
<dbReference type="Pfam" id="PF00687">
    <property type="entry name" value="Ribosomal_L1"/>
    <property type="match status" value="1"/>
</dbReference>
<dbReference type="PIRSF" id="PIRSF002155">
    <property type="entry name" value="Ribosomal_L1"/>
    <property type="match status" value="1"/>
</dbReference>
<dbReference type="SUPFAM" id="SSF56808">
    <property type="entry name" value="Ribosomal protein L1"/>
    <property type="match status" value="1"/>
</dbReference>
<dbReference type="PROSITE" id="PS01199">
    <property type="entry name" value="RIBOSOMAL_L1"/>
    <property type="match status" value="1"/>
</dbReference>
<evidence type="ECO:0000255" key="1">
    <source>
        <dbReference type="HAMAP-Rule" id="MF_01318"/>
    </source>
</evidence>
<evidence type="ECO:0000305" key="2"/>
<comment type="function">
    <text evidence="1">Binds directly to 23S rRNA. The L1 stalk is quite mobile in the ribosome, and is involved in E site tRNA release.</text>
</comment>
<comment type="function">
    <text evidence="1">Protein L1 is also a translational repressor protein, it controls the translation of the L11 operon by binding to its mRNA.</text>
</comment>
<comment type="subunit">
    <text evidence="1">Part of the 50S ribosomal subunit.</text>
</comment>
<comment type="similarity">
    <text evidence="1">Belongs to the universal ribosomal protein uL1 family.</text>
</comment>
<sequence length="230" mass="23874">MAVGKKLVKAREGIDREKLYAIADAIKLVKERATAKFDETIEVAINLGVDPRHADQMVRGVVTLPNGTGRTLRVGVFARGAKADEAKAAGADVVGAEDLVEIVQGGKIEFDRCIATPDMMPLVGRLGKVLGPRGMMPNPKIGTVTMDVAGAVKGAKGGSVEFRVEKAGIIQAGVGKASFSEEKLVENIKALADAVVKAKPAGAKGTYVQRVAVSSTMGPGVKVEPGSLNS</sequence>
<keyword id="KW-1185">Reference proteome</keyword>
<keyword id="KW-0678">Repressor</keyword>
<keyword id="KW-0687">Ribonucleoprotein</keyword>
<keyword id="KW-0689">Ribosomal protein</keyword>
<keyword id="KW-0694">RNA-binding</keyword>
<keyword id="KW-0699">rRNA-binding</keyword>
<keyword id="KW-0810">Translation regulation</keyword>
<keyword id="KW-0820">tRNA-binding</keyword>
<name>RL1_AFIC5</name>
<gene>
    <name evidence="1" type="primary">rplA</name>
    <name type="ordered locus">OCAR_5660</name>
    <name type="ordered locus">OCA5_c23450</name>
</gene>
<protein>
    <recommendedName>
        <fullName evidence="1">Large ribosomal subunit protein uL1</fullName>
    </recommendedName>
    <alternativeName>
        <fullName evidence="2">50S ribosomal protein L1</fullName>
    </alternativeName>
</protein>
<organism>
    <name type="scientific">Afipia carboxidovorans (strain ATCC 49405 / DSM 1227 / KCTC 32145 / OM5)</name>
    <name type="common">Oligotropha carboxidovorans</name>
    <dbReference type="NCBI Taxonomy" id="504832"/>
    <lineage>
        <taxon>Bacteria</taxon>
        <taxon>Pseudomonadati</taxon>
        <taxon>Pseudomonadota</taxon>
        <taxon>Alphaproteobacteria</taxon>
        <taxon>Hyphomicrobiales</taxon>
        <taxon>Nitrobacteraceae</taxon>
        <taxon>Afipia</taxon>
    </lineage>
</organism>
<reference key="1">
    <citation type="journal article" date="2008" name="J. Bacteriol.">
        <title>Genome sequence of the chemolithoautotrophic bacterium Oligotropha carboxidovorans OM5T.</title>
        <authorList>
            <person name="Paul D."/>
            <person name="Bridges S."/>
            <person name="Burgess S.C."/>
            <person name="Dandass Y."/>
            <person name="Lawrence M.L."/>
        </authorList>
    </citation>
    <scope>NUCLEOTIDE SEQUENCE [LARGE SCALE GENOMIC DNA]</scope>
    <source>
        <strain>ATCC 49405 / DSM 1227 / KCTC 32145 / OM5</strain>
    </source>
</reference>
<reference key="2">
    <citation type="journal article" date="2011" name="J. Bacteriol.">
        <title>Complete genome sequences of the chemolithoautotrophic Oligotropha carboxidovorans strains OM4 and OM5.</title>
        <authorList>
            <person name="Volland S."/>
            <person name="Rachinger M."/>
            <person name="Strittmatter A."/>
            <person name="Daniel R."/>
            <person name="Gottschalk G."/>
            <person name="Meyer O."/>
        </authorList>
    </citation>
    <scope>NUCLEOTIDE SEQUENCE [LARGE SCALE GENOMIC DNA]</scope>
    <source>
        <strain>ATCC 49405 / DSM 1227 / KCTC 32145 / OM5</strain>
    </source>
</reference>
<accession>B6JER6</accession>
<accession>F8BZE2</accession>
<feature type="chain" id="PRO_1000141437" description="Large ribosomal subunit protein uL1">
    <location>
        <begin position="1"/>
        <end position="230"/>
    </location>
</feature>
<proteinExistence type="inferred from homology"/>